<proteinExistence type="inferred from homology"/>
<protein>
    <recommendedName>
        <fullName>FKBP-type peptidyl-prolyl cis-trans isomerase SlyD</fullName>
        <shortName>PPIase</shortName>
        <ecNumber>5.2.1.8</ecNumber>
    </recommendedName>
    <alternativeName>
        <fullName>Metallochaperone SlyD</fullName>
    </alternativeName>
</protein>
<gene>
    <name type="primary">slyD</name>
    <name type="ordered locus">HI_0699</name>
</gene>
<comment type="function">
    <text evidence="1">Folding helper with both chaperone and peptidyl-prolyl cis-trans isomerase (PPIase) activities. Chaperone activity prevents aggregation of unfolded or partially folded proteins and promotes their correct folding. PPIases catalyze the cis-trans isomerization of Xaa-Pro bonds of peptides, which accelerates slow steps of protein folding and thus shortens the lifetime of intermediates. Both strategies lower the concentration of intermediates and increase the productivity and yield of the folding reaction (By similarity).</text>
</comment>
<comment type="function">
    <text evidence="1">Also involved in hydrogenase metallocenter assembly, probably by participating in the nickel insertion step. This function in hydrogenase biosynthesis requires chaperone activity and the presence of the metal-binding domain, but not PPIase activity (By similarity).</text>
</comment>
<comment type="catalytic activity">
    <reaction>
        <text>[protein]-peptidylproline (omega=180) = [protein]-peptidylproline (omega=0)</text>
        <dbReference type="Rhea" id="RHEA:16237"/>
        <dbReference type="Rhea" id="RHEA-COMP:10747"/>
        <dbReference type="Rhea" id="RHEA-COMP:10748"/>
        <dbReference type="ChEBI" id="CHEBI:83833"/>
        <dbReference type="ChEBI" id="CHEBI:83834"/>
        <dbReference type="EC" id="5.2.1.8"/>
    </reaction>
</comment>
<comment type="subcellular location">
    <subcellularLocation>
        <location evidence="1">Cytoplasm</location>
    </subcellularLocation>
</comment>
<comment type="domain">
    <text evidence="1">The N-terminal region consists of two globular folded domains that contain prolyl isomerase and chaperone activities.</text>
</comment>
<comment type="domain">
    <text evidence="1">The C-terminal region binds nickel ions.</text>
</comment>
<comment type="similarity">
    <text evidence="4">Belongs to the FKBP-type PPIase family.</text>
</comment>
<reference key="1">
    <citation type="journal article" date="1995" name="Science">
        <title>Whole-genome random sequencing and assembly of Haemophilus influenzae Rd.</title>
        <authorList>
            <person name="Fleischmann R.D."/>
            <person name="Adams M.D."/>
            <person name="White O."/>
            <person name="Clayton R.A."/>
            <person name="Kirkness E.F."/>
            <person name="Kerlavage A.R."/>
            <person name="Bult C.J."/>
            <person name="Tomb J.-F."/>
            <person name="Dougherty B.A."/>
            <person name="Merrick J.M."/>
            <person name="McKenney K."/>
            <person name="Sutton G.G."/>
            <person name="FitzHugh W."/>
            <person name="Fields C.A."/>
            <person name="Gocayne J.D."/>
            <person name="Scott J.D."/>
            <person name="Shirley R."/>
            <person name="Liu L.-I."/>
            <person name="Glodek A."/>
            <person name="Kelley J.M."/>
            <person name="Weidman J.F."/>
            <person name="Phillips C.A."/>
            <person name="Spriggs T."/>
            <person name="Hedblom E."/>
            <person name="Cotton M.D."/>
            <person name="Utterback T.R."/>
            <person name="Hanna M.C."/>
            <person name="Nguyen D.T."/>
            <person name="Saudek D.M."/>
            <person name="Brandon R.C."/>
            <person name="Fine L.D."/>
            <person name="Fritchman J.L."/>
            <person name="Fuhrmann J.L."/>
            <person name="Geoghagen N.S.M."/>
            <person name="Gnehm C.L."/>
            <person name="McDonald L.A."/>
            <person name="Small K.V."/>
            <person name="Fraser C.M."/>
            <person name="Smith H.O."/>
            <person name="Venter J.C."/>
        </authorList>
    </citation>
    <scope>NUCLEOTIDE SEQUENCE [LARGE SCALE GENOMIC DNA]</scope>
    <source>
        <strain>ATCC 51907 / DSM 11121 / KW20 / Rd</strain>
    </source>
</reference>
<keyword id="KW-0143">Chaperone</keyword>
<keyword id="KW-0963">Cytoplasm</keyword>
<keyword id="KW-0413">Isomerase</keyword>
<keyword id="KW-0479">Metal-binding</keyword>
<keyword id="KW-0533">Nickel</keyword>
<keyword id="KW-1185">Reference proteome</keyword>
<keyword id="KW-0697">Rotamase</keyword>
<accession>P44830</accession>
<feature type="chain" id="PRO_0000075358" description="FKBP-type peptidyl-prolyl cis-trans isomerase SlyD">
    <location>
        <begin position="1"/>
        <end position="190"/>
    </location>
</feature>
<feature type="domain" description="PPIase FKBP-type" evidence="3">
    <location>
        <begin position="1"/>
        <end position="95"/>
    </location>
</feature>
<feature type="region of interest" description="PPIase first part" evidence="1">
    <location>
        <begin position="1"/>
        <end position="69"/>
    </location>
</feature>
<feature type="region of interest" description="IF-chaperone" evidence="1">
    <location>
        <begin position="76"/>
        <end position="120"/>
    </location>
</feature>
<feature type="region of interest" description="PPIase second part" evidence="1">
    <location>
        <begin position="129"/>
        <end position="151"/>
    </location>
</feature>
<feature type="binding site" evidence="2">
    <location>
        <position position="167"/>
    </location>
    <ligand>
        <name>Ni(2+)</name>
        <dbReference type="ChEBI" id="CHEBI:49786"/>
    </ligand>
</feature>
<feature type="binding site" evidence="2">
    <location>
        <position position="169"/>
    </location>
    <ligand>
        <name>Ni(2+)</name>
        <dbReference type="ChEBI" id="CHEBI:49786"/>
    </ligand>
</feature>
<feature type="binding site" evidence="2">
    <location>
        <position position="185"/>
    </location>
    <ligand>
        <name>Ni(2+)</name>
        <dbReference type="ChEBI" id="CHEBI:49786"/>
    </ligand>
</feature>
<feature type="binding site" evidence="2">
    <location>
        <position position="187"/>
    </location>
    <ligand>
        <name>Ni(2+)</name>
        <dbReference type="ChEBI" id="CHEBI:49786"/>
    </ligand>
</feature>
<dbReference type="EC" id="5.2.1.8"/>
<dbReference type="EMBL" id="L42023">
    <property type="protein sequence ID" value="AAC22358.1"/>
    <property type="molecule type" value="Genomic_DNA"/>
</dbReference>
<dbReference type="PIR" id="D64087">
    <property type="entry name" value="D64087"/>
</dbReference>
<dbReference type="RefSeq" id="NP_438858.1">
    <property type="nucleotide sequence ID" value="NC_000907.1"/>
</dbReference>
<dbReference type="SMR" id="P44830"/>
<dbReference type="STRING" id="71421.HI_0699"/>
<dbReference type="EnsemblBacteria" id="AAC22358">
    <property type="protein sequence ID" value="AAC22358"/>
    <property type="gene ID" value="HI_0699"/>
</dbReference>
<dbReference type="KEGG" id="hin:HI_0699"/>
<dbReference type="PATRIC" id="fig|71421.8.peg.730"/>
<dbReference type="eggNOG" id="COG1047">
    <property type="taxonomic scope" value="Bacteria"/>
</dbReference>
<dbReference type="HOGENOM" id="CLU_098197_1_0_6"/>
<dbReference type="OrthoDB" id="9808891at2"/>
<dbReference type="PhylomeDB" id="P44830"/>
<dbReference type="BioCyc" id="HINF71421:G1GJ1-733-MONOMER"/>
<dbReference type="Proteomes" id="UP000000579">
    <property type="component" value="Chromosome"/>
</dbReference>
<dbReference type="GO" id="GO:0005829">
    <property type="term" value="C:cytosol"/>
    <property type="evidence" value="ECO:0000318"/>
    <property type="project" value="GO_Central"/>
</dbReference>
<dbReference type="GO" id="GO:0046872">
    <property type="term" value="F:metal ion binding"/>
    <property type="evidence" value="ECO:0007669"/>
    <property type="project" value="UniProtKB-KW"/>
</dbReference>
<dbReference type="GO" id="GO:0003755">
    <property type="term" value="F:peptidyl-prolyl cis-trans isomerase activity"/>
    <property type="evidence" value="ECO:0000318"/>
    <property type="project" value="GO_Central"/>
</dbReference>
<dbReference type="GO" id="GO:0042026">
    <property type="term" value="P:protein refolding"/>
    <property type="evidence" value="ECO:0000318"/>
    <property type="project" value="GO_Central"/>
</dbReference>
<dbReference type="FunFam" id="2.40.10.330:FF:000001">
    <property type="entry name" value="Peptidyl-prolyl cis-trans isomerase"/>
    <property type="match status" value="1"/>
</dbReference>
<dbReference type="Gene3D" id="2.40.10.330">
    <property type="match status" value="1"/>
</dbReference>
<dbReference type="Gene3D" id="3.10.50.40">
    <property type="match status" value="1"/>
</dbReference>
<dbReference type="InterPro" id="IPR046357">
    <property type="entry name" value="PPIase_dom_sf"/>
</dbReference>
<dbReference type="InterPro" id="IPR001179">
    <property type="entry name" value="PPIase_FKBP_dom"/>
</dbReference>
<dbReference type="InterPro" id="IPR048261">
    <property type="entry name" value="SlpA/SlyD-like_ins_sf"/>
</dbReference>
<dbReference type="NCBIfam" id="NF008008">
    <property type="entry name" value="PRK10737.1"/>
    <property type="match status" value="1"/>
</dbReference>
<dbReference type="PANTHER" id="PTHR47861">
    <property type="entry name" value="FKBP-TYPE PEPTIDYL-PROLYL CIS-TRANS ISOMERASE SLYD"/>
    <property type="match status" value="1"/>
</dbReference>
<dbReference type="PANTHER" id="PTHR47861:SF3">
    <property type="entry name" value="FKBP-TYPE PEPTIDYL-PROLYL CIS-TRANS ISOMERASE SLYD"/>
    <property type="match status" value="1"/>
</dbReference>
<dbReference type="Pfam" id="PF00254">
    <property type="entry name" value="FKBP_C"/>
    <property type="match status" value="1"/>
</dbReference>
<dbReference type="SUPFAM" id="SSF54534">
    <property type="entry name" value="FKBP-like"/>
    <property type="match status" value="1"/>
</dbReference>
<dbReference type="PROSITE" id="PS50059">
    <property type="entry name" value="FKBP_PPIASE"/>
    <property type="match status" value="1"/>
</dbReference>
<sequence length="190" mass="20658">MKVEKNVVVSISYQVRTQDGVLVDEAPANQPLEYLQGHNNLVIGLEKALEGKEVGDKFEVRVQPEEGYGAYSENMVQRVPKDVFQGVDELEVGMRFLADTDIGPVPVVITEIDGDEVVVDGNHMLAGQELHFTVEVVAAREATLEEIAHGHVHGAHSHDDDEEGHGCGCGGHHHEHNHEHNHGSCGCGGH</sequence>
<evidence type="ECO:0000250" key="1"/>
<evidence type="ECO:0000255" key="2"/>
<evidence type="ECO:0000255" key="3">
    <source>
        <dbReference type="PROSITE-ProRule" id="PRU00277"/>
    </source>
</evidence>
<evidence type="ECO:0000305" key="4"/>
<name>SLYD_HAEIN</name>
<organism>
    <name type="scientific">Haemophilus influenzae (strain ATCC 51907 / DSM 11121 / KW20 / Rd)</name>
    <dbReference type="NCBI Taxonomy" id="71421"/>
    <lineage>
        <taxon>Bacteria</taxon>
        <taxon>Pseudomonadati</taxon>
        <taxon>Pseudomonadota</taxon>
        <taxon>Gammaproteobacteria</taxon>
        <taxon>Pasteurellales</taxon>
        <taxon>Pasteurellaceae</taxon>
        <taxon>Haemophilus</taxon>
    </lineage>
</organism>